<gene>
    <name type="ordered locus">Ken-092</name>
</gene>
<comment type="induction">
    <text evidence="1">Expressed in the late phase of the viral replicative cycle.</text>
</comment>
<comment type="similarity">
    <text evidence="1">Belongs to the asfivirus B385R family.</text>
</comment>
<protein>
    <recommendedName>
        <fullName>Zinc finger protein B385R</fullName>
        <shortName>pB385R</shortName>
    </recommendedName>
</protein>
<proteinExistence type="inferred from homology"/>
<accession>P0CAG0</accession>
<sequence length="385" mass="45289">MDEIINKYQAVEKLFKEIQEGLAAYDQYKTLISELLHYNNHIKQEYFNFLMIISPYLIRAHSGETLRNKVNNEIKRLILVENINTKISKTLVSVNFLLQKKLSADGMKTKNMWCTNNPMLQVRTAHNLFKQLCDTQSKTQWVQTLKYKECKYCHTDMVFNTTQFGLQCPNCGCIQELMGTIFDETHFYNHDGQKAKSGIFNPNRHYRFWIEHILGRNSEQELGTKQDPCGTKVLQQLKKIIKRDNKCIALLTVENIRKMLKEINRTDLNNCVSLILRKLTGVGPPQISESILLRGEYIFTEAIKIREKVCKKGRINRNYYPYYIYKIFDAILPPNDTTNRRILQYIHLQGNDTLANNDSEWESICMELPEIKWKPTDRTHCVHFF</sequence>
<feature type="chain" id="PRO_0000373672" description="Zinc finger protein B385R">
    <location>
        <begin position="1"/>
        <end position="385"/>
    </location>
</feature>
<feature type="zinc finger region" description="C2H2-type">
    <location>
        <begin position="166"/>
        <end position="190"/>
    </location>
</feature>
<organismHost>
    <name type="scientific">Ornithodoros</name>
    <name type="common">relapsing fever ticks</name>
    <dbReference type="NCBI Taxonomy" id="6937"/>
</organismHost>
<organismHost>
    <name type="scientific">Phacochoerus aethiopicus</name>
    <name type="common">Warthog</name>
    <dbReference type="NCBI Taxonomy" id="85517"/>
</organismHost>
<organismHost>
    <name type="scientific">Phacochoerus africanus</name>
    <name type="common">Warthog</name>
    <dbReference type="NCBI Taxonomy" id="41426"/>
</organismHost>
<organismHost>
    <name type="scientific">Potamochoerus larvatus</name>
    <name type="common">Bushpig</name>
    <dbReference type="NCBI Taxonomy" id="273792"/>
</organismHost>
<organismHost>
    <name type="scientific">Sus scrofa</name>
    <name type="common">Pig</name>
    <dbReference type="NCBI Taxonomy" id="9823"/>
</organismHost>
<organism>
    <name type="scientific">African swine fever virus (isolate Pig/Kenya/KEN-50/1950)</name>
    <name type="common">ASFV</name>
    <dbReference type="NCBI Taxonomy" id="561445"/>
    <lineage>
        <taxon>Viruses</taxon>
        <taxon>Varidnaviria</taxon>
        <taxon>Bamfordvirae</taxon>
        <taxon>Nucleocytoviricota</taxon>
        <taxon>Pokkesviricetes</taxon>
        <taxon>Asfuvirales</taxon>
        <taxon>Asfarviridae</taxon>
        <taxon>Asfivirus</taxon>
        <taxon>African swine fever virus</taxon>
    </lineage>
</organism>
<keyword id="KW-0426">Late protein</keyword>
<keyword id="KW-0479">Metal-binding</keyword>
<keyword id="KW-0862">Zinc</keyword>
<keyword id="KW-0863">Zinc-finger</keyword>
<evidence type="ECO:0000305" key="1"/>
<name>VF385_ASFK5</name>
<dbReference type="EMBL" id="AY261360">
    <property type="status" value="NOT_ANNOTATED_CDS"/>
    <property type="molecule type" value="Genomic_DNA"/>
</dbReference>
<dbReference type="Proteomes" id="UP000000861">
    <property type="component" value="Segment"/>
</dbReference>
<dbReference type="GO" id="GO:0008270">
    <property type="term" value="F:zinc ion binding"/>
    <property type="evidence" value="ECO:0007669"/>
    <property type="project" value="UniProtKB-KW"/>
</dbReference>
<dbReference type="GO" id="GO:0046782">
    <property type="term" value="P:regulation of viral transcription"/>
    <property type="evidence" value="ECO:0007669"/>
    <property type="project" value="InterPro"/>
</dbReference>
<dbReference type="InterPro" id="IPR007031">
    <property type="entry name" value="Poxvirus_VLTF3"/>
</dbReference>
<dbReference type="InterPro" id="IPR014900">
    <property type="entry name" value="VLTF-3_Zn_ribbon"/>
</dbReference>
<dbReference type="Pfam" id="PF08792">
    <property type="entry name" value="A2L_zn_ribbon"/>
    <property type="match status" value="1"/>
</dbReference>
<dbReference type="Pfam" id="PF04947">
    <property type="entry name" value="Pox_VLTF3"/>
    <property type="match status" value="1"/>
</dbReference>
<dbReference type="PROSITE" id="PS00028">
    <property type="entry name" value="ZINC_FINGER_C2H2_1"/>
    <property type="match status" value="1"/>
</dbReference>
<reference key="1">
    <citation type="submission" date="2003-03" db="EMBL/GenBank/DDBJ databases">
        <title>African swine fever virus genomes.</title>
        <authorList>
            <person name="Kutish G.F."/>
            <person name="Rock D.L."/>
        </authorList>
    </citation>
    <scope>NUCLEOTIDE SEQUENCE [LARGE SCALE GENOMIC DNA]</scope>
</reference>